<keyword id="KW-0007">Acetylation</keyword>
<keyword id="KW-0010">Activator</keyword>
<keyword id="KW-1017">Isopeptide bond</keyword>
<keyword id="KW-0597">Phosphoprotein</keyword>
<keyword id="KW-1185">Reference proteome</keyword>
<keyword id="KW-0804">Transcription</keyword>
<keyword id="KW-0805">Transcription regulation</keyword>
<keyword id="KW-0810">Translation regulation</keyword>
<keyword id="KW-0832">Ubl conjugation</keyword>
<evidence type="ECO:0000250" key="1">
    <source>
        <dbReference type="UniProtKB" id="Q7L1Q6"/>
    </source>
</evidence>
<evidence type="ECO:0000255" key="2">
    <source>
        <dbReference type="PROSITE-ProRule" id="PRU00695"/>
    </source>
</evidence>
<evidence type="ECO:0000256" key="3">
    <source>
        <dbReference type="SAM" id="MobiDB-lite"/>
    </source>
</evidence>
<evidence type="ECO:0000305" key="4"/>
<accession>Q5R7L4</accession>
<sequence length="419" mass="47899">MNNQKQQKPTLSGQRFKTRKRDEKERFDPTQFQDCIIQGLTETGTDLEAVAKFLDASGAKLDYRRYAETLFDILVAGGMLAPGGTLADDMMRTDVCVFAAQEDLETMQAFAQVFNKLIRRYKYLEKGFEDGVKKLLLFLKGFSESERNKLAMLTGVLLANGTLNASILNSLYNENLVKEGVSAAFAVKLFKSWINEKDINAVAASLRKVSMDNRLMELFPANKQSVEHFTKYFTEAGLKELSEYVRNQQTIGARKELQKELQEQMSRGDPFKDIILYVKEEMKKNNIPEPVVIGIVWSSVMSTVEWNKKEELVAEQAIKHLKQYSPLLAAFTTQGQSELTLLLKIQEYCYDNIHFMKAFQKIVVLFYKAEVLSEGPILKWYKDAHVAKGKSVFLEQMKKFVEWLKNAEEESESEAEEGD</sequence>
<proteinExistence type="evidence at transcript level"/>
<gene>
    <name type="primary">BZW1</name>
    <name evidence="1" type="synonym">5MP2</name>
</gene>
<protein>
    <recommendedName>
        <fullName evidence="1">eIF5-mimic protein 2</fullName>
    </recommendedName>
    <alternativeName>
        <fullName>Basic leucine zipper and W2 domain-containing protein 1</fullName>
    </alternativeName>
</protein>
<dbReference type="EMBL" id="CR860101">
    <property type="protein sequence ID" value="CAH92246.1"/>
    <property type="molecule type" value="mRNA"/>
</dbReference>
<dbReference type="RefSeq" id="NP_001126313.1">
    <property type="nucleotide sequence ID" value="NM_001132841.1"/>
</dbReference>
<dbReference type="SMR" id="Q5R7L4"/>
<dbReference type="FunCoup" id="Q5R7L4">
    <property type="interactions" value="2828"/>
</dbReference>
<dbReference type="STRING" id="9601.ENSPPYP00000014591"/>
<dbReference type="GeneID" id="100173292"/>
<dbReference type="KEGG" id="pon:100173292"/>
<dbReference type="CTD" id="9689"/>
<dbReference type="eggNOG" id="KOG2297">
    <property type="taxonomic scope" value="Eukaryota"/>
</dbReference>
<dbReference type="InParanoid" id="Q5R7L4"/>
<dbReference type="OrthoDB" id="1727522at2759"/>
<dbReference type="Proteomes" id="UP000001595">
    <property type="component" value="Unplaced"/>
</dbReference>
<dbReference type="GO" id="GO:0005737">
    <property type="term" value="C:cytoplasm"/>
    <property type="evidence" value="ECO:0007669"/>
    <property type="project" value="TreeGrafter"/>
</dbReference>
<dbReference type="GO" id="GO:0016020">
    <property type="term" value="C:membrane"/>
    <property type="evidence" value="ECO:0007669"/>
    <property type="project" value="TreeGrafter"/>
</dbReference>
<dbReference type="GO" id="GO:0006446">
    <property type="term" value="P:regulation of translational initiation"/>
    <property type="evidence" value="ECO:0000250"/>
    <property type="project" value="UniProtKB"/>
</dbReference>
<dbReference type="CDD" id="cd11560">
    <property type="entry name" value="W2_eIF5C_like"/>
    <property type="match status" value="1"/>
</dbReference>
<dbReference type="FunFam" id="1.25.40.180:FF:000006">
    <property type="entry name" value="Basic leucine zipper and W2 domain-containing protein 1"/>
    <property type="match status" value="1"/>
</dbReference>
<dbReference type="Gene3D" id="1.25.40.180">
    <property type="match status" value="1"/>
</dbReference>
<dbReference type="InterPro" id="IPR016024">
    <property type="entry name" value="ARM-type_fold"/>
</dbReference>
<dbReference type="InterPro" id="IPR051245">
    <property type="entry name" value="eIF5-mimic_regulator"/>
</dbReference>
<dbReference type="InterPro" id="IPR043510">
    <property type="entry name" value="W2_BZW1/2"/>
</dbReference>
<dbReference type="InterPro" id="IPR003307">
    <property type="entry name" value="W2_domain"/>
</dbReference>
<dbReference type="PANTHER" id="PTHR14208">
    <property type="entry name" value="BASIC LEUCINE ZIPPER AND W2 DOMAIN-CONTAINING PROTEIN"/>
    <property type="match status" value="1"/>
</dbReference>
<dbReference type="PANTHER" id="PTHR14208:SF0">
    <property type="entry name" value="EIF5-MIMIC PROTEIN 2"/>
    <property type="match status" value="1"/>
</dbReference>
<dbReference type="Pfam" id="PF25504">
    <property type="entry name" value="HEAT_5MP1_2"/>
    <property type="match status" value="1"/>
</dbReference>
<dbReference type="Pfam" id="PF02020">
    <property type="entry name" value="W2"/>
    <property type="match status" value="1"/>
</dbReference>
<dbReference type="SMART" id="SM00515">
    <property type="entry name" value="eIF5C"/>
    <property type="match status" value="1"/>
</dbReference>
<dbReference type="SUPFAM" id="SSF48371">
    <property type="entry name" value="ARM repeat"/>
    <property type="match status" value="1"/>
</dbReference>
<dbReference type="PROSITE" id="PS51363">
    <property type="entry name" value="W2"/>
    <property type="match status" value="1"/>
</dbReference>
<comment type="function">
    <text evidence="1">Translation initiation regulator which represses repeat-associated non-AUG (RAN) initiated translation probably by acting as a competitive inhibitor of eukaryotic translation initiation factor 5 (EIF5) function (By similarity). Enhances histone H4 gene transcription but does not seem to bind DNA directly (By similarity).</text>
</comment>
<comment type="similarity">
    <text evidence="4">Belongs to the BZW family.</text>
</comment>
<reference key="1">
    <citation type="submission" date="2004-11" db="EMBL/GenBank/DDBJ databases">
        <authorList>
            <consortium name="The German cDNA consortium"/>
        </authorList>
    </citation>
    <scope>NUCLEOTIDE SEQUENCE [LARGE SCALE MRNA]</scope>
    <source>
        <tissue>Heart</tissue>
    </source>
</reference>
<organism>
    <name type="scientific">Pongo abelii</name>
    <name type="common">Sumatran orangutan</name>
    <name type="synonym">Pongo pygmaeus abelii</name>
    <dbReference type="NCBI Taxonomy" id="9601"/>
    <lineage>
        <taxon>Eukaryota</taxon>
        <taxon>Metazoa</taxon>
        <taxon>Chordata</taxon>
        <taxon>Craniata</taxon>
        <taxon>Vertebrata</taxon>
        <taxon>Euteleostomi</taxon>
        <taxon>Mammalia</taxon>
        <taxon>Eutheria</taxon>
        <taxon>Euarchontoglires</taxon>
        <taxon>Primates</taxon>
        <taxon>Haplorrhini</taxon>
        <taxon>Catarrhini</taxon>
        <taxon>Hominidae</taxon>
        <taxon>Pongo</taxon>
    </lineage>
</organism>
<name>5MP2_PONAB</name>
<feature type="chain" id="PRO_0000254611" description="eIF5-mimic protein 2">
    <location>
        <begin position="1"/>
        <end position="419"/>
    </location>
</feature>
<feature type="domain" description="W2" evidence="2">
    <location>
        <begin position="247"/>
        <end position="414"/>
    </location>
</feature>
<feature type="region of interest" description="Disordered" evidence="3">
    <location>
        <begin position="1"/>
        <end position="26"/>
    </location>
</feature>
<feature type="compositionally biased region" description="Polar residues" evidence="3">
    <location>
        <begin position="1"/>
        <end position="15"/>
    </location>
</feature>
<feature type="modified residue" description="N-acetylmethionine" evidence="1">
    <location>
        <position position="1"/>
    </location>
</feature>
<feature type="modified residue" description="Phosphoserine" evidence="1">
    <location>
        <position position="12"/>
    </location>
</feature>
<feature type="modified residue" description="Phosphoserine" evidence="1">
    <location>
        <position position="411"/>
    </location>
</feature>
<feature type="modified residue" description="Phosphoserine" evidence="1">
    <location>
        <position position="413"/>
    </location>
</feature>
<feature type="cross-link" description="Glycyl lysine isopeptide (Lys-Gly) (interchain with G-Cter in SUMO2)" evidence="1">
    <location>
        <position position="368"/>
    </location>
</feature>